<feature type="signal peptide" evidence="1">
    <location>
        <begin position="1"/>
        <end position="19"/>
    </location>
</feature>
<feature type="chain" id="PRO_0000018016" description="17 kDa surface antigen">
    <location>
        <begin position="20"/>
        <end position="159"/>
    </location>
</feature>
<feature type="lipid moiety-binding region" description="N-palmitoyl cysteine" evidence="2">
    <location>
        <position position="20"/>
    </location>
</feature>
<feature type="lipid moiety-binding region" description="S-diacylglycerol cysteine" evidence="2">
    <location>
        <position position="20"/>
    </location>
</feature>
<evidence type="ECO:0000255" key="1">
    <source>
        <dbReference type="PROSITE-ProRule" id="PRU00303"/>
    </source>
</evidence>
<evidence type="ECO:0000305" key="2"/>
<dbReference type="EMBL" id="D16515">
    <property type="protein sequence ID" value="BAA03965.1"/>
    <property type="molecule type" value="Genomic_DNA"/>
</dbReference>
<dbReference type="EMBL" id="AP011533">
    <property type="protein sequence ID" value="BAK97136.1"/>
    <property type="molecule type" value="Genomic_DNA"/>
</dbReference>
<dbReference type="RefSeq" id="WP_014121135.1">
    <property type="nucleotide sequence ID" value="NZ_AMRT02000004.1"/>
</dbReference>
<dbReference type="GeneID" id="34514919"/>
<dbReference type="KEGG" id="rja:RJP_0944"/>
<dbReference type="HOGENOM" id="CLU_118535_0_0_5"/>
<dbReference type="Proteomes" id="UP000002659">
    <property type="component" value="Chromosome"/>
</dbReference>
<dbReference type="GO" id="GO:0009279">
    <property type="term" value="C:cell outer membrane"/>
    <property type="evidence" value="ECO:0007669"/>
    <property type="project" value="UniProtKB-SubCell"/>
</dbReference>
<dbReference type="InterPro" id="IPR032635">
    <property type="entry name" value="Anti_2"/>
</dbReference>
<dbReference type="InterPro" id="IPR008816">
    <property type="entry name" value="Gly_zipper_2TM_dom"/>
</dbReference>
<dbReference type="InterPro" id="IPR016364">
    <property type="entry name" value="Surface_antigen_Rickettsia"/>
</dbReference>
<dbReference type="Pfam" id="PF16998">
    <property type="entry name" value="17kDa_Anti_2"/>
    <property type="match status" value="1"/>
</dbReference>
<dbReference type="Pfam" id="PF05433">
    <property type="entry name" value="Rick_17kDa_Anti"/>
    <property type="match status" value="1"/>
</dbReference>
<dbReference type="PIRSF" id="PIRSF002721">
    <property type="entry name" value="Surface_antigen_Rickettsia"/>
    <property type="match status" value="1"/>
</dbReference>
<dbReference type="PROSITE" id="PS51257">
    <property type="entry name" value="PROKAR_LIPOPROTEIN"/>
    <property type="match status" value="1"/>
</dbReference>
<comment type="subcellular location">
    <subcellularLocation>
        <location evidence="2">Cell outer membrane</location>
        <topology evidence="2">Lipid-anchor</topology>
    </subcellularLocation>
</comment>
<comment type="similarity">
    <text evidence="2">Belongs to the rickettsiale 17 kDa surface antigen family.</text>
</comment>
<protein>
    <recommendedName>
        <fullName>17 kDa surface antigen</fullName>
    </recommendedName>
</protein>
<organism>
    <name type="scientific">Rickettsia japonica (strain ATCC VR-1363 / YH)</name>
    <dbReference type="NCBI Taxonomy" id="652620"/>
    <lineage>
        <taxon>Bacteria</taxon>
        <taxon>Pseudomonadati</taxon>
        <taxon>Pseudomonadota</taxon>
        <taxon>Alphaproteobacteria</taxon>
        <taxon>Rickettsiales</taxon>
        <taxon>Rickettsiaceae</taxon>
        <taxon>Rickettsieae</taxon>
        <taxon>Rickettsia</taxon>
        <taxon>spotted fever group</taxon>
    </lineage>
</organism>
<name>17KD_RICJY</name>
<keyword id="KW-0998">Cell outer membrane</keyword>
<keyword id="KW-0449">Lipoprotein</keyword>
<keyword id="KW-0472">Membrane</keyword>
<keyword id="KW-0564">Palmitate</keyword>
<keyword id="KW-0732">Signal</keyword>
<accession>Q52764</accession>
<accession>G4KLP4</accession>
<gene>
    <name type="primary">omp</name>
    <name type="ordered locus">RJP_0944</name>
</gene>
<proteinExistence type="inferred from homology"/>
<reference key="1">
    <citation type="journal article" date="1995" name="J. Clin. Microbiol.">
        <title>Specific amplification of Rickettsia japonica DNA from clinical specimens by PCR.</title>
        <authorList>
            <person name="Furuya Y."/>
            <person name="Katayama T."/>
            <person name="Yoshida Y."/>
            <person name="Kaiho I."/>
        </authorList>
    </citation>
    <scope>NUCLEOTIDE SEQUENCE [GENOMIC DNA]</scope>
    <source>
        <strain>ATCC VR-1363 / YH</strain>
    </source>
</reference>
<reference key="2">
    <citation type="journal article" date="2013" name="PLoS ONE">
        <title>Complete genomic DNA sequence of the East Asian spotted fever disease agent Rickettsia japonica.</title>
        <authorList>
            <person name="Matsutani M."/>
            <person name="Ogawa M."/>
            <person name="Takaoka N."/>
            <person name="Hanaoka N."/>
            <person name="Toh H."/>
            <person name="Yamashita A."/>
            <person name="Oshima K."/>
            <person name="Hirakawa H."/>
            <person name="Kuhara S."/>
            <person name="Suzuki H."/>
            <person name="Hattori M."/>
            <person name="Kishimoto T."/>
            <person name="Ando S."/>
            <person name="Azuma Y."/>
            <person name="Shirai M."/>
        </authorList>
    </citation>
    <scope>NUCLEOTIDE SEQUENCE [LARGE SCALE GENOMIC DNA]</scope>
    <source>
        <strain>ATCC VR-1363 / YH</strain>
    </source>
</reference>
<sequence>MKLLSKIMIIALATSMLQACNGPGGMNKQGTGTLLGGAGGALLGSQFGKGTGQLVGVGVGALLGAVLGGQIGAGMDEQDRRLAELTSQRALETAPSGSNVEWRNPDNGNYGYVTPNKTYRNSTGQYCREYTQTVVIGGKQQKAYGNACRQPDGQWQVVN</sequence>